<comment type="function">
    <text evidence="1">One of the primary rRNA binding proteins, it binds directly near the 3'-end of the 23S rRNA, where it nucleates assembly of the 50S subunit.</text>
</comment>
<comment type="subunit">
    <text evidence="1">Part of the 50S ribosomal subunit. Forms a cluster with proteins L14 and L19.</text>
</comment>
<comment type="PTM">
    <text evidence="1">Methylated by PrmB.</text>
</comment>
<comment type="similarity">
    <text evidence="1">Belongs to the universal ribosomal protein uL3 family.</text>
</comment>
<feature type="chain" id="PRO_1000165884" description="Large ribosomal subunit protein uL3">
    <location>
        <begin position="1"/>
        <end position="209"/>
    </location>
</feature>
<feature type="modified residue" description="N5-methylglutamine" evidence="1">
    <location>
        <position position="150"/>
    </location>
</feature>
<accession>B7UK44</accession>
<proteinExistence type="inferred from homology"/>
<evidence type="ECO:0000255" key="1">
    <source>
        <dbReference type="HAMAP-Rule" id="MF_01325"/>
    </source>
</evidence>
<evidence type="ECO:0000305" key="2"/>
<name>RL3_ECO27</name>
<gene>
    <name evidence="1" type="primary">rplC</name>
    <name type="ordered locus">E2348C_3583</name>
</gene>
<keyword id="KW-0488">Methylation</keyword>
<keyword id="KW-1185">Reference proteome</keyword>
<keyword id="KW-0687">Ribonucleoprotein</keyword>
<keyword id="KW-0689">Ribosomal protein</keyword>
<keyword id="KW-0694">RNA-binding</keyword>
<keyword id="KW-0699">rRNA-binding</keyword>
<protein>
    <recommendedName>
        <fullName evidence="1">Large ribosomal subunit protein uL3</fullName>
    </recommendedName>
    <alternativeName>
        <fullName evidence="2">50S ribosomal protein L3</fullName>
    </alternativeName>
</protein>
<sequence length="209" mass="22244">MIGLVGKKVGMTRIFTEDGVSIPVTVIEVEANRVTQVKDLANDGYRAIQVTTGAKKANRVTKPEAGHFAKAGVEAGRGLWEFRLAEGEEFTVGQSISVELFADVKKVDVTGTSKGKGFAGTVKRWNFRTQDATHGNSLSHRVPGSIGQNQTPGKVFKGKKMAGQMGNERVTVQSLDVVRVDAERNLLLVKGAVPGATGSDLIVKPAVKA</sequence>
<organism>
    <name type="scientific">Escherichia coli O127:H6 (strain E2348/69 / EPEC)</name>
    <dbReference type="NCBI Taxonomy" id="574521"/>
    <lineage>
        <taxon>Bacteria</taxon>
        <taxon>Pseudomonadati</taxon>
        <taxon>Pseudomonadota</taxon>
        <taxon>Gammaproteobacteria</taxon>
        <taxon>Enterobacterales</taxon>
        <taxon>Enterobacteriaceae</taxon>
        <taxon>Escherichia</taxon>
    </lineage>
</organism>
<reference key="1">
    <citation type="journal article" date="2009" name="J. Bacteriol.">
        <title>Complete genome sequence and comparative genome analysis of enteropathogenic Escherichia coli O127:H6 strain E2348/69.</title>
        <authorList>
            <person name="Iguchi A."/>
            <person name="Thomson N.R."/>
            <person name="Ogura Y."/>
            <person name="Saunders D."/>
            <person name="Ooka T."/>
            <person name="Henderson I.R."/>
            <person name="Harris D."/>
            <person name="Asadulghani M."/>
            <person name="Kurokawa K."/>
            <person name="Dean P."/>
            <person name="Kenny B."/>
            <person name="Quail M.A."/>
            <person name="Thurston S."/>
            <person name="Dougan G."/>
            <person name="Hayashi T."/>
            <person name="Parkhill J."/>
            <person name="Frankel G."/>
        </authorList>
    </citation>
    <scope>NUCLEOTIDE SEQUENCE [LARGE SCALE GENOMIC DNA]</scope>
    <source>
        <strain>E2348/69 / EPEC</strain>
    </source>
</reference>
<dbReference type="EMBL" id="FM180568">
    <property type="protein sequence ID" value="CAS11131.1"/>
    <property type="molecule type" value="Genomic_DNA"/>
</dbReference>
<dbReference type="RefSeq" id="WP_000579833.1">
    <property type="nucleotide sequence ID" value="NC_011601.1"/>
</dbReference>
<dbReference type="SMR" id="B7UK44"/>
<dbReference type="GeneID" id="86948184"/>
<dbReference type="KEGG" id="ecg:E2348C_3583"/>
<dbReference type="HOGENOM" id="CLU_044142_4_1_6"/>
<dbReference type="Proteomes" id="UP000008205">
    <property type="component" value="Chromosome"/>
</dbReference>
<dbReference type="GO" id="GO:0022625">
    <property type="term" value="C:cytosolic large ribosomal subunit"/>
    <property type="evidence" value="ECO:0007669"/>
    <property type="project" value="TreeGrafter"/>
</dbReference>
<dbReference type="GO" id="GO:0019843">
    <property type="term" value="F:rRNA binding"/>
    <property type="evidence" value="ECO:0007669"/>
    <property type="project" value="UniProtKB-UniRule"/>
</dbReference>
<dbReference type="GO" id="GO:0003735">
    <property type="term" value="F:structural constituent of ribosome"/>
    <property type="evidence" value="ECO:0007669"/>
    <property type="project" value="InterPro"/>
</dbReference>
<dbReference type="GO" id="GO:0006412">
    <property type="term" value="P:translation"/>
    <property type="evidence" value="ECO:0007669"/>
    <property type="project" value="UniProtKB-UniRule"/>
</dbReference>
<dbReference type="FunFam" id="2.40.30.10:FF:000004">
    <property type="entry name" value="50S ribosomal protein L3"/>
    <property type="match status" value="1"/>
</dbReference>
<dbReference type="FunFam" id="3.30.160.810:FF:000001">
    <property type="entry name" value="50S ribosomal protein L3"/>
    <property type="match status" value="1"/>
</dbReference>
<dbReference type="Gene3D" id="3.30.160.810">
    <property type="match status" value="1"/>
</dbReference>
<dbReference type="Gene3D" id="2.40.30.10">
    <property type="entry name" value="Translation factors"/>
    <property type="match status" value="1"/>
</dbReference>
<dbReference type="HAMAP" id="MF_01325_B">
    <property type="entry name" value="Ribosomal_uL3_B"/>
    <property type="match status" value="1"/>
</dbReference>
<dbReference type="InterPro" id="IPR000597">
    <property type="entry name" value="Ribosomal_uL3"/>
</dbReference>
<dbReference type="InterPro" id="IPR019927">
    <property type="entry name" value="Ribosomal_uL3_bac/org-type"/>
</dbReference>
<dbReference type="InterPro" id="IPR019926">
    <property type="entry name" value="Ribosomal_uL3_CS"/>
</dbReference>
<dbReference type="InterPro" id="IPR009000">
    <property type="entry name" value="Transl_B-barrel_sf"/>
</dbReference>
<dbReference type="NCBIfam" id="TIGR03625">
    <property type="entry name" value="L3_bact"/>
    <property type="match status" value="1"/>
</dbReference>
<dbReference type="PANTHER" id="PTHR11229">
    <property type="entry name" value="50S RIBOSOMAL PROTEIN L3"/>
    <property type="match status" value="1"/>
</dbReference>
<dbReference type="PANTHER" id="PTHR11229:SF16">
    <property type="entry name" value="LARGE RIBOSOMAL SUBUNIT PROTEIN UL3C"/>
    <property type="match status" value="1"/>
</dbReference>
<dbReference type="Pfam" id="PF00297">
    <property type="entry name" value="Ribosomal_L3"/>
    <property type="match status" value="1"/>
</dbReference>
<dbReference type="SUPFAM" id="SSF50447">
    <property type="entry name" value="Translation proteins"/>
    <property type="match status" value="1"/>
</dbReference>
<dbReference type="PROSITE" id="PS00474">
    <property type="entry name" value="RIBOSOMAL_L3"/>
    <property type="match status" value="1"/>
</dbReference>